<dbReference type="EC" id="6.1.1.21" evidence="1"/>
<dbReference type="EMBL" id="CP000561">
    <property type="protein sequence ID" value="ABO07955.1"/>
    <property type="molecule type" value="Genomic_DNA"/>
</dbReference>
<dbReference type="RefSeq" id="WP_011849213.1">
    <property type="nucleotide sequence ID" value="NC_009073.1"/>
</dbReference>
<dbReference type="SMR" id="A3MTI8"/>
<dbReference type="STRING" id="410359.Pcal_0528"/>
<dbReference type="GeneID" id="4909550"/>
<dbReference type="KEGG" id="pcl:Pcal_0528"/>
<dbReference type="eggNOG" id="arCOG00404">
    <property type="taxonomic scope" value="Archaea"/>
</dbReference>
<dbReference type="HOGENOM" id="CLU_025113_3_0_2"/>
<dbReference type="OrthoDB" id="8659at2157"/>
<dbReference type="Proteomes" id="UP000001431">
    <property type="component" value="Chromosome"/>
</dbReference>
<dbReference type="GO" id="GO:0005737">
    <property type="term" value="C:cytoplasm"/>
    <property type="evidence" value="ECO:0007669"/>
    <property type="project" value="UniProtKB-SubCell"/>
</dbReference>
<dbReference type="GO" id="GO:0005524">
    <property type="term" value="F:ATP binding"/>
    <property type="evidence" value="ECO:0007669"/>
    <property type="project" value="UniProtKB-UniRule"/>
</dbReference>
<dbReference type="GO" id="GO:0004821">
    <property type="term" value="F:histidine-tRNA ligase activity"/>
    <property type="evidence" value="ECO:0007669"/>
    <property type="project" value="UniProtKB-UniRule"/>
</dbReference>
<dbReference type="GO" id="GO:0006427">
    <property type="term" value="P:histidyl-tRNA aminoacylation"/>
    <property type="evidence" value="ECO:0007669"/>
    <property type="project" value="UniProtKB-UniRule"/>
</dbReference>
<dbReference type="GO" id="GO:0000105">
    <property type="term" value="P:L-histidine biosynthetic process"/>
    <property type="evidence" value="ECO:0007669"/>
    <property type="project" value="InterPro"/>
</dbReference>
<dbReference type="CDD" id="cd00773">
    <property type="entry name" value="HisRS-like_core"/>
    <property type="match status" value="1"/>
</dbReference>
<dbReference type="Gene3D" id="3.40.50.800">
    <property type="entry name" value="Anticodon-binding domain"/>
    <property type="match status" value="1"/>
</dbReference>
<dbReference type="Gene3D" id="3.30.930.10">
    <property type="entry name" value="Bira Bifunctional Protein, Domain 2"/>
    <property type="match status" value="1"/>
</dbReference>
<dbReference type="HAMAP" id="MF_00127">
    <property type="entry name" value="His_tRNA_synth"/>
    <property type="match status" value="1"/>
</dbReference>
<dbReference type="HAMAP" id="MF_00125">
    <property type="entry name" value="HisZ"/>
    <property type="match status" value="1"/>
</dbReference>
<dbReference type="InterPro" id="IPR006195">
    <property type="entry name" value="aa-tRNA-synth_II"/>
</dbReference>
<dbReference type="InterPro" id="IPR045864">
    <property type="entry name" value="aa-tRNA-synth_II/BPL/LPL"/>
</dbReference>
<dbReference type="InterPro" id="IPR004154">
    <property type="entry name" value="Anticodon-bd"/>
</dbReference>
<dbReference type="InterPro" id="IPR036621">
    <property type="entry name" value="Anticodon-bd_dom_sf"/>
</dbReference>
<dbReference type="InterPro" id="IPR015807">
    <property type="entry name" value="His-tRNA-ligase"/>
</dbReference>
<dbReference type="InterPro" id="IPR041715">
    <property type="entry name" value="HisRS-like_core"/>
</dbReference>
<dbReference type="InterPro" id="IPR004516">
    <property type="entry name" value="HisRS/HisZ"/>
</dbReference>
<dbReference type="InterPro" id="IPR004517">
    <property type="entry name" value="HisZ"/>
</dbReference>
<dbReference type="NCBIfam" id="TIGR00442">
    <property type="entry name" value="hisS"/>
    <property type="match status" value="1"/>
</dbReference>
<dbReference type="PANTHER" id="PTHR43707:SF1">
    <property type="entry name" value="HISTIDINE--TRNA LIGASE, MITOCHONDRIAL-RELATED"/>
    <property type="match status" value="1"/>
</dbReference>
<dbReference type="PANTHER" id="PTHR43707">
    <property type="entry name" value="HISTIDYL-TRNA SYNTHETASE"/>
    <property type="match status" value="1"/>
</dbReference>
<dbReference type="Pfam" id="PF03129">
    <property type="entry name" value="HGTP_anticodon"/>
    <property type="match status" value="1"/>
</dbReference>
<dbReference type="Pfam" id="PF13393">
    <property type="entry name" value="tRNA-synt_His"/>
    <property type="match status" value="1"/>
</dbReference>
<dbReference type="PIRSF" id="PIRSF001549">
    <property type="entry name" value="His-tRNA_synth"/>
    <property type="match status" value="1"/>
</dbReference>
<dbReference type="SUPFAM" id="SSF52954">
    <property type="entry name" value="Class II aaRS ABD-related"/>
    <property type="match status" value="1"/>
</dbReference>
<dbReference type="SUPFAM" id="SSF55681">
    <property type="entry name" value="Class II aaRS and biotin synthetases"/>
    <property type="match status" value="1"/>
</dbReference>
<dbReference type="PROSITE" id="PS50862">
    <property type="entry name" value="AA_TRNA_LIGASE_II"/>
    <property type="match status" value="1"/>
</dbReference>
<accession>A3MTI8</accession>
<organism>
    <name type="scientific">Pyrobaculum calidifontis (strain DSM 21063 / JCM 11548 / VA1)</name>
    <dbReference type="NCBI Taxonomy" id="410359"/>
    <lineage>
        <taxon>Archaea</taxon>
        <taxon>Thermoproteota</taxon>
        <taxon>Thermoprotei</taxon>
        <taxon>Thermoproteales</taxon>
        <taxon>Thermoproteaceae</taxon>
        <taxon>Pyrobaculum</taxon>
    </lineage>
</organism>
<protein>
    <recommendedName>
        <fullName evidence="1">Histidine--tRNA ligase</fullName>
        <ecNumber evidence="1">6.1.1.21</ecNumber>
    </recommendedName>
    <alternativeName>
        <fullName evidence="1">Histidyl-tRNA synthetase</fullName>
        <shortName evidence="1">HisRS</shortName>
    </alternativeName>
</protein>
<comment type="catalytic activity">
    <reaction evidence="1">
        <text>tRNA(His) + L-histidine + ATP = L-histidyl-tRNA(His) + AMP + diphosphate + H(+)</text>
        <dbReference type="Rhea" id="RHEA:17313"/>
        <dbReference type="Rhea" id="RHEA-COMP:9665"/>
        <dbReference type="Rhea" id="RHEA-COMP:9689"/>
        <dbReference type="ChEBI" id="CHEBI:15378"/>
        <dbReference type="ChEBI" id="CHEBI:30616"/>
        <dbReference type="ChEBI" id="CHEBI:33019"/>
        <dbReference type="ChEBI" id="CHEBI:57595"/>
        <dbReference type="ChEBI" id="CHEBI:78442"/>
        <dbReference type="ChEBI" id="CHEBI:78527"/>
        <dbReference type="ChEBI" id="CHEBI:456215"/>
        <dbReference type="EC" id="6.1.1.21"/>
    </reaction>
</comment>
<comment type="subcellular location">
    <subcellularLocation>
        <location evidence="1">Cytoplasm</location>
    </subcellularLocation>
</comment>
<comment type="similarity">
    <text evidence="1">Belongs to the class-II aminoacyl-tRNA synthetase family.</text>
</comment>
<keyword id="KW-0030">Aminoacyl-tRNA synthetase</keyword>
<keyword id="KW-0067">ATP-binding</keyword>
<keyword id="KW-0963">Cytoplasm</keyword>
<keyword id="KW-0436">Ligase</keyword>
<keyword id="KW-0547">Nucleotide-binding</keyword>
<keyword id="KW-0648">Protein biosynthesis</keyword>
<gene>
    <name evidence="1" type="primary">hisS</name>
    <name type="ordered locus">Pcal_0528</name>
</gene>
<name>SYH_PYRCJ</name>
<proteinExistence type="inferred from homology"/>
<feature type="chain" id="PRO_1000016427" description="Histidine--tRNA ligase">
    <location>
        <begin position="1"/>
        <end position="421"/>
    </location>
</feature>
<reference key="1">
    <citation type="submission" date="2007-02" db="EMBL/GenBank/DDBJ databases">
        <title>Complete sequence of Pyrobaculum calidifontis JCM 11548.</title>
        <authorList>
            <consortium name="US DOE Joint Genome Institute"/>
            <person name="Copeland A."/>
            <person name="Lucas S."/>
            <person name="Lapidus A."/>
            <person name="Barry K."/>
            <person name="Glavina del Rio T."/>
            <person name="Dalin E."/>
            <person name="Tice H."/>
            <person name="Pitluck S."/>
            <person name="Chain P."/>
            <person name="Malfatti S."/>
            <person name="Shin M."/>
            <person name="Vergez L."/>
            <person name="Schmutz J."/>
            <person name="Larimer F."/>
            <person name="Land M."/>
            <person name="Hauser L."/>
            <person name="Kyrpides N."/>
            <person name="Mikhailova N."/>
            <person name="Cozen A.E."/>
            <person name="Fitz-Gibbon S.T."/>
            <person name="House C.H."/>
            <person name="Saltikov C."/>
            <person name="Lowe T.M."/>
            <person name="Richardson P."/>
        </authorList>
    </citation>
    <scope>NUCLEOTIDE SEQUENCE [LARGE SCALE GENOMIC DNA]</scope>
    <source>
        <strain>DSM 21063 / JCM 11548 / VA1</strain>
    </source>
</reference>
<evidence type="ECO:0000255" key="1">
    <source>
        <dbReference type="HAMAP-Rule" id="MF_00127"/>
    </source>
</evidence>
<sequence length="421" mass="47962">MSGLPDHLRRPVRGMRDWLPHQYYALQQLEALLSRVAESFGYRRVETPVVEHFEVLARKAGQEIVNEIYYFRDKAGRELGLRFDMTVPIARVVSYNLDLPRPIRWYYFTKVFRYDEPQHGRYREFYQFGVELIGSASPRADAEVVHLLAESLAAAGASNYVIKLNDRRVVDKLLEGMGLAAYKDVVYKALDKRYKAPREEVVGIMTRGGVPPSKAEELYEKATEMPLQEAVDFVTRIDKELGGFYAAFVKYLEAAVGLERLIFDLSIVRGLDYYTGVVFEAFAGEYKLAVGGGGRYDDLLQLYSGVKTPALGFAIGVERLMEAVGLQAVEKPLDYYIYIFDESAYQTAIYIARELRRKGYSAVVELGDKGLKDAFEYVLKIGTRFLVILGKKELEKGVVKVRDLQKREEVEKPIDEFIRGA</sequence>